<dbReference type="EMBL" id="D21090">
    <property type="protein sequence ID" value="BAA04652.1"/>
    <property type="molecule type" value="mRNA"/>
</dbReference>
<dbReference type="EMBL" id="AY313777">
    <property type="protein sequence ID" value="AAP81008.1"/>
    <property type="molecule type" value="mRNA"/>
</dbReference>
<dbReference type="EMBL" id="AY165178">
    <property type="protein sequence ID" value="AAN47194.1"/>
    <property type="molecule type" value="Genomic_DNA"/>
</dbReference>
<dbReference type="EMBL" id="AK125226">
    <property type="protein sequence ID" value="BAG54170.1"/>
    <property type="molecule type" value="mRNA"/>
</dbReference>
<dbReference type="EMBL" id="AL137852">
    <property type="status" value="NOT_ANNOTATED_CDS"/>
    <property type="molecule type" value="Genomic_DNA"/>
</dbReference>
<dbReference type="EMBL" id="CH471105">
    <property type="protein sequence ID" value="EAW59016.1"/>
    <property type="molecule type" value="Genomic_DNA"/>
</dbReference>
<dbReference type="EMBL" id="CH471105">
    <property type="protein sequence ID" value="EAW59017.1"/>
    <property type="molecule type" value="Genomic_DNA"/>
</dbReference>
<dbReference type="EMBL" id="BC020973">
    <property type="protein sequence ID" value="AAH20973.1"/>
    <property type="molecule type" value="mRNA"/>
</dbReference>
<dbReference type="CCDS" id="CCDS59138.1">
    <molecule id="P54727-2"/>
</dbReference>
<dbReference type="CCDS" id="CCDS6769.1">
    <molecule id="P54727-1"/>
</dbReference>
<dbReference type="PIR" id="S44346">
    <property type="entry name" value="S44346"/>
</dbReference>
<dbReference type="RefSeq" id="NP_001231653.1">
    <molecule id="P54727-2"/>
    <property type="nucleotide sequence ID" value="NM_001244724.2"/>
</dbReference>
<dbReference type="RefSeq" id="NP_002865.1">
    <molecule id="P54727-1"/>
    <property type="nucleotide sequence ID" value="NM_002874.5"/>
</dbReference>
<dbReference type="PDB" id="1P1A">
    <property type="method" value="NMR"/>
    <property type="chains" value="A=1-82"/>
</dbReference>
<dbReference type="PDB" id="1PVE">
    <property type="method" value="NMR"/>
    <property type="chains" value="A=275-342"/>
</dbReference>
<dbReference type="PDB" id="1UEL">
    <property type="method" value="NMR"/>
    <property type="chains" value="A=1-87"/>
</dbReference>
<dbReference type="PDB" id="8EBS">
    <property type="method" value="EM"/>
    <property type="resolution" value="4.00 A"/>
    <property type="chains" value="I=1-409"/>
</dbReference>
<dbReference type="PDB" id="8EBV">
    <property type="method" value="EM"/>
    <property type="resolution" value="7.10 A"/>
    <property type="chains" value="I=1-409"/>
</dbReference>
<dbReference type="PDB" id="8EBW">
    <property type="method" value="EM"/>
    <property type="resolution" value="5.60 A"/>
    <property type="chains" value="I=1-409"/>
</dbReference>
<dbReference type="PDBsum" id="1P1A"/>
<dbReference type="PDBsum" id="1PVE"/>
<dbReference type="PDBsum" id="1UEL"/>
<dbReference type="PDBsum" id="8EBS"/>
<dbReference type="PDBsum" id="8EBV"/>
<dbReference type="PDBsum" id="8EBW"/>
<dbReference type="BMRB" id="P54727"/>
<dbReference type="EMDB" id="EMD-27996"/>
<dbReference type="EMDB" id="EMD-27999"/>
<dbReference type="EMDB" id="EMD-28000"/>
<dbReference type="EMDB" id="EMD-6495"/>
<dbReference type="EMDB" id="EMD-6497"/>
<dbReference type="EMDB" id="EMD-6498"/>
<dbReference type="SMR" id="P54727"/>
<dbReference type="BioGRID" id="111824">
    <property type="interactions" value="242"/>
</dbReference>
<dbReference type="ComplexPortal" id="CPX-2669">
    <property type="entry name" value="XPC complex, RAD23B variant"/>
</dbReference>
<dbReference type="CORUM" id="P54727"/>
<dbReference type="DIP" id="DIP-39944N"/>
<dbReference type="FunCoup" id="P54727">
    <property type="interactions" value="4533"/>
</dbReference>
<dbReference type="IntAct" id="P54727">
    <property type="interactions" value="93"/>
</dbReference>
<dbReference type="MINT" id="P54727"/>
<dbReference type="STRING" id="9606.ENSP00000350708"/>
<dbReference type="GlyCosmos" id="P54727">
    <property type="glycosylation" value="25 sites, 2 glycans"/>
</dbReference>
<dbReference type="GlyGen" id="P54727">
    <property type="glycosylation" value="26 sites, 2 O-linked glycans (25 sites)"/>
</dbReference>
<dbReference type="iPTMnet" id="P54727"/>
<dbReference type="MetOSite" id="P54727"/>
<dbReference type="PhosphoSitePlus" id="P54727"/>
<dbReference type="SwissPalm" id="P54727"/>
<dbReference type="BioMuta" id="RAD23B"/>
<dbReference type="DMDM" id="1709985"/>
<dbReference type="OGP" id="P54727"/>
<dbReference type="CPTAC" id="CPTAC-1456"/>
<dbReference type="CPTAC" id="CPTAC-1457"/>
<dbReference type="CPTAC" id="CPTAC-1458"/>
<dbReference type="CPTAC" id="CPTAC-3248"/>
<dbReference type="CPTAC" id="CPTAC-3249"/>
<dbReference type="CPTAC" id="CPTAC-707"/>
<dbReference type="CPTAC" id="CPTAC-723"/>
<dbReference type="jPOST" id="P54727"/>
<dbReference type="MassIVE" id="P54727"/>
<dbReference type="PaxDb" id="9606-ENSP00000350708"/>
<dbReference type="PeptideAtlas" id="P54727"/>
<dbReference type="ProteomicsDB" id="33998"/>
<dbReference type="ProteomicsDB" id="56701">
    <molecule id="P54727-1"/>
</dbReference>
<dbReference type="Pumba" id="P54727"/>
<dbReference type="TopDownProteomics" id="P54727-1">
    <molecule id="P54727-1"/>
</dbReference>
<dbReference type="ABCD" id="P54727">
    <property type="antibodies" value="2 sequenced antibodies"/>
</dbReference>
<dbReference type="Antibodypedia" id="29324">
    <property type="antibodies" value="527 antibodies from 37 providers"/>
</dbReference>
<dbReference type="CPTC" id="P54727">
    <property type="antibodies" value="2 antibodies"/>
</dbReference>
<dbReference type="DNASU" id="5887"/>
<dbReference type="Ensembl" id="ENST00000358015.8">
    <molecule id="P54727-1"/>
    <property type="protein sequence ID" value="ENSP00000350708.3"/>
    <property type="gene ID" value="ENSG00000119318.13"/>
</dbReference>
<dbReference type="Ensembl" id="ENST00000416373.6">
    <molecule id="P54727-2"/>
    <property type="protein sequence ID" value="ENSP00000405623.2"/>
    <property type="gene ID" value="ENSG00000119318.13"/>
</dbReference>
<dbReference type="GeneID" id="5887"/>
<dbReference type="KEGG" id="hsa:5887"/>
<dbReference type="MANE-Select" id="ENST00000358015.8">
    <property type="protein sequence ID" value="ENSP00000350708.3"/>
    <property type="RefSeq nucleotide sequence ID" value="NM_002874.5"/>
    <property type="RefSeq protein sequence ID" value="NP_002865.1"/>
</dbReference>
<dbReference type="UCSC" id="uc004bde.4">
    <molecule id="P54727-1"/>
    <property type="organism name" value="human"/>
</dbReference>
<dbReference type="AGR" id="HGNC:9813"/>
<dbReference type="CTD" id="5887"/>
<dbReference type="DisGeNET" id="5887"/>
<dbReference type="GeneCards" id="RAD23B"/>
<dbReference type="HGNC" id="HGNC:9813">
    <property type="gene designation" value="RAD23B"/>
</dbReference>
<dbReference type="HPA" id="ENSG00000119318">
    <property type="expression patterns" value="Low tissue specificity"/>
</dbReference>
<dbReference type="MIM" id="600062">
    <property type="type" value="gene"/>
</dbReference>
<dbReference type="neXtProt" id="NX_P54727"/>
<dbReference type="OpenTargets" id="ENSG00000119318"/>
<dbReference type="PharmGKB" id="PA34173"/>
<dbReference type="VEuPathDB" id="HostDB:ENSG00000119318"/>
<dbReference type="eggNOG" id="KOG0011">
    <property type="taxonomic scope" value="Eukaryota"/>
</dbReference>
<dbReference type="GeneTree" id="ENSGT00390000012078"/>
<dbReference type="HOGENOM" id="CLU_040364_0_1_1"/>
<dbReference type="InParanoid" id="P54727"/>
<dbReference type="OMA" id="PHMLEPI"/>
<dbReference type="OrthoDB" id="419317at2759"/>
<dbReference type="PAN-GO" id="P54727">
    <property type="GO annotations" value="6 GO annotations based on evolutionary models"/>
</dbReference>
<dbReference type="PhylomeDB" id="P54727"/>
<dbReference type="TreeFam" id="TF101216"/>
<dbReference type="PathwayCommons" id="P54727"/>
<dbReference type="Reactome" id="R-HSA-532668">
    <property type="pathway name" value="N-glycan trimming in the ER and Calnexin/Calreticulin cycle"/>
</dbReference>
<dbReference type="Reactome" id="R-HSA-5689877">
    <property type="pathway name" value="Josephin domain DUBs"/>
</dbReference>
<dbReference type="Reactome" id="R-HSA-5696394">
    <property type="pathway name" value="DNA Damage Recognition in GG-NER"/>
</dbReference>
<dbReference type="Reactome" id="R-HSA-5696395">
    <property type="pathway name" value="Formation of Incision Complex in GG-NER"/>
</dbReference>
<dbReference type="SignaLink" id="P54727"/>
<dbReference type="SIGNOR" id="P54727"/>
<dbReference type="BioGRID-ORCS" id="5887">
    <property type="hits" value="29 hits in 1125 CRISPR screens"/>
</dbReference>
<dbReference type="CD-CODE" id="550E224B">
    <property type="entry name" value="Proteasome condensate"/>
</dbReference>
<dbReference type="CD-CODE" id="DEE660B4">
    <property type="entry name" value="Stress granule"/>
</dbReference>
<dbReference type="ChiTaRS" id="RAD23B">
    <property type="organism name" value="human"/>
</dbReference>
<dbReference type="EvolutionaryTrace" id="P54727"/>
<dbReference type="GeneWiki" id="RAD23B"/>
<dbReference type="GenomeRNAi" id="5887"/>
<dbReference type="Pharos" id="P54727">
    <property type="development level" value="Tbio"/>
</dbReference>
<dbReference type="PRO" id="PR:P54727"/>
<dbReference type="Proteomes" id="UP000005640">
    <property type="component" value="Chromosome 9"/>
</dbReference>
<dbReference type="RNAct" id="P54727">
    <property type="molecule type" value="protein"/>
</dbReference>
<dbReference type="Bgee" id="ENSG00000119318">
    <property type="expression patterns" value="Expressed in corpus epididymis and 218 other cell types or tissues"/>
</dbReference>
<dbReference type="ExpressionAtlas" id="P54727">
    <property type="expression patterns" value="baseline and differential"/>
</dbReference>
<dbReference type="GO" id="GO:0005829">
    <property type="term" value="C:cytosol"/>
    <property type="evidence" value="ECO:0000314"/>
    <property type="project" value="HPA"/>
</dbReference>
<dbReference type="GO" id="GO:0005654">
    <property type="term" value="C:nucleoplasm"/>
    <property type="evidence" value="ECO:0000314"/>
    <property type="project" value="HPA"/>
</dbReference>
<dbReference type="GO" id="GO:0005634">
    <property type="term" value="C:nucleus"/>
    <property type="evidence" value="ECO:0000304"/>
    <property type="project" value="ProtInc"/>
</dbReference>
<dbReference type="GO" id="GO:0000502">
    <property type="term" value="C:proteasome complex"/>
    <property type="evidence" value="ECO:0007669"/>
    <property type="project" value="UniProtKB-KW"/>
</dbReference>
<dbReference type="GO" id="GO:0071942">
    <property type="term" value="C:XPC complex"/>
    <property type="evidence" value="ECO:0000314"/>
    <property type="project" value="UniProtKB"/>
</dbReference>
<dbReference type="GO" id="GO:0003684">
    <property type="term" value="F:damaged DNA binding"/>
    <property type="evidence" value="ECO:0007669"/>
    <property type="project" value="InterPro"/>
</dbReference>
<dbReference type="GO" id="GO:0140612">
    <property type="term" value="F:DNA damage sensor activity"/>
    <property type="evidence" value="ECO:0000314"/>
    <property type="project" value="GO_Central"/>
</dbReference>
<dbReference type="GO" id="GO:0031593">
    <property type="term" value="F:polyubiquitin modification-dependent protein binding"/>
    <property type="evidence" value="ECO:0000314"/>
    <property type="project" value="UniProtKB"/>
</dbReference>
<dbReference type="GO" id="GO:0070628">
    <property type="term" value="F:proteasome binding"/>
    <property type="evidence" value="ECO:0000318"/>
    <property type="project" value="GO_Central"/>
</dbReference>
<dbReference type="GO" id="GO:0000978">
    <property type="term" value="F:RNA polymerase II cis-regulatory region sequence-specific DNA binding"/>
    <property type="evidence" value="ECO:0007669"/>
    <property type="project" value="Ensembl"/>
</dbReference>
<dbReference type="GO" id="GO:0061629">
    <property type="term" value="F:RNA polymerase II-specific DNA-binding transcription factor binding"/>
    <property type="evidence" value="ECO:0007669"/>
    <property type="project" value="Ensembl"/>
</dbReference>
<dbReference type="GO" id="GO:0003697">
    <property type="term" value="F:single-stranded DNA binding"/>
    <property type="evidence" value="ECO:0000304"/>
    <property type="project" value="ProtInc"/>
</dbReference>
<dbReference type="GO" id="GO:0043130">
    <property type="term" value="F:ubiquitin binding"/>
    <property type="evidence" value="ECO:0000318"/>
    <property type="project" value="GO_Central"/>
</dbReference>
<dbReference type="GO" id="GO:0098761">
    <property type="term" value="P:cellular response to interleukin-7"/>
    <property type="evidence" value="ECO:0007669"/>
    <property type="project" value="Ensembl"/>
</dbReference>
<dbReference type="GO" id="GO:0048568">
    <property type="term" value="P:embryonic organ development"/>
    <property type="evidence" value="ECO:0007669"/>
    <property type="project" value="Ensembl"/>
</dbReference>
<dbReference type="GO" id="GO:0006289">
    <property type="term" value="P:nucleotide-excision repair"/>
    <property type="evidence" value="ECO:0000314"/>
    <property type="project" value="UniProtKB"/>
</dbReference>
<dbReference type="GO" id="GO:0043161">
    <property type="term" value="P:proteasome-mediated ubiquitin-dependent protein catabolic process"/>
    <property type="evidence" value="ECO:0000318"/>
    <property type="project" value="GO_Central"/>
</dbReference>
<dbReference type="GO" id="GO:0032434">
    <property type="term" value="P:regulation of proteasomal ubiquitin-dependent protein catabolic process"/>
    <property type="evidence" value="ECO:0000314"/>
    <property type="project" value="UniProtKB"/>
</dbReference>
<dbReference type="GO" id="GO:0007283">
    <property type="term" value="P:spermatogenesis"/>
    <property type="evidence" value="ECO:0007669"/>
    <property type="project" value="Ensembl"/>
</dbReference>
<dbReference type="CDD" id="cd14377">
    <property type="entry name" value="UBA1_Rad23"/>
    <property type="match status" value="1"/>
</dbReference>
<dbReference type="CDD" id="cd14428">
    <property type="entry name" value="UBA2_HR23B"/>
    <property type="match status" value="1"/>
</dbReference>
<dbReference type="CDD" id="cd16126">
    <property type="entry name" value="Ubl_HR23B"/>
    <property type="match status" value="1"/>
</dbReference>
<dbReference type="FunFam" id="1.10.10.540:FF:000001">
    <property type="entry name" value="UV excision repair protein RAD23 B"/>
    <property type="match status" value="1"/>
</dbReference>
<dbReference type="FunFam" id="1.10.8.10:FF:000002">
    <property type="entry name" value="UV excision repair protein RAD23 homolog"/>
    <property type="match status" value="1"/>
</dbReference>
<dbReference type="FunFam" id="1.10.8.10:FF:000003">
    <property type="entry name" value="UV excision repair protein RAD23 homolog"/>
    <property type="match status" value="1"/>
</dbReference>
<dbReference type="FunFam" id="3.10.20.90:FF:000053">
    <property type="entry name" value="UV excision repair protein RAD23 homolog A"/>
    <property type="match status" value="1"/>
</dbReference>
<dbReference type="Gene3D" id="1.10.8.10">
    <property type="entry name" value="DNA helicase RuvA subunit, C-terminal domain"/>
    <property type="match status" value="2"/>
</dbReference>
<dbReference type="Gene3D" id="3.10.20.90">
    <property type="entry name" value="Phosphatidylinositol 3-kinase Catalytic Subunit, Chain A, domain 1"/>
    <property type="match status" value="1"/>
</dbReference>
<dbReference type="Gene3D" id="1.10.10.540">
    <property type="entry name" value="XPC-binding domain"/>
    <property type="match status" value="1"/>
</dbReference>
<dbReference type="InterPro" id="IPR004806">
    <property type="entry name" value="Rad23"/>
</dbReference>
<dbReference type="InterPro" id="IPR041811">
    <property type="entry name" value="RAD23A/B_UBA1"/>
</dbReference>
<dbReference type="InterPro" id="IPR006636">
    <property type="entry name" value="STI1_HS-bd"/>
</dbReference>
<dbReference type="InterPro" id="IPR015940">
    <property type="entry name" value="UBA"/>
</dbReference>
<dbReference type="InterPro" id="IPR009060">
    <property type="entry name" value="UBA-like_sf"/>
</dbReference>
<dbReference type="InterPro" id="IPR000626">
    <property type="entry name" value="Ubiquitin-like_dom"/>
</dbReference>
<dbReference type="InterPro" id="IPR029071">
    <property type="entry name" value="Ubiquitin-like_domsf"/>
</dbReference>
<dbReference type="InterPro" id="IPR015360">
    <property type="entry name" value="XPC-bd"/>
</dbReference>
<dbReference type="InterPro" id="IPR036353">
    <property type="entry name" value="XPC-bd_sf"/>
</dbReference>
<dbReference type="NCBIfam" id="TIGR00601">
    <property type="entry name" value="rad23"/>
    <property type="match status" value="1"/>
</dbReference>
<dbReference type="PANTHER" id="PTHR10621">
    <property type="entry name" value="UV EXCISION REPAIR PROTEIN RAD23"/>
    <property type="match status" value="1"/>
</dbReference>
<dbReference type="PANTHER" id="PTHR10621:SF13">
    <property type="entry name" value="UV EXCISION REPAIR PROTEIN RAD23 HOMOLOG B"/>
    <property type="match status" value="1"/>
</dbReference>
<dbReference type="Pfam" id="PF00627">
    <property type="entry name" value="UBA"/>
    <property type="match status" value="2"/>
</dbReference>
<dbReference type="Pfam" id="PF00240">
    <property type="entry name" value="ubiquitin"/>
    <property type="match status" value="1"/>
</dbReference>
<dbReference type="Pfam" id="PF09280">
    <property type="entry name" value="XPC-binding"/>
    <property type="match status" value="1"/>
</dbReference>
<dbReference type="PRINTS" id="PR01839">
    <property type="entry name" value="RAD23PROTEIN"/>
</dbReference>
<dbReference type="SMART" id="SM00727">
    <property type="entry name" value="STI1"/>
    <property type="match status" value="1"/>
</dbReference>
<dbReference type="SMART" id="SM00165">
    <property type="entry name" value="UBA"/>
    <property type="match status" value="2"/>
</dbReference>
<dbReference type="SMART" id="SM00213">
    <property type="entry name" value="UBQ"/>
    <property type="match status" value="1"/>
</dbReference>
<dbReference type="SUPFAM" id="SSF46934">
    <property type="entry name" value="UBA-like"/>
    <property type="match status" value="2"/>
</dbReference>
<dbReference type="SUPFAM" id="SSF54236">
    <property type="entry name" value="Ubiquitin-like"/>
    <property type="match status" value="1"/>
</dbReference>
<dbReference type="SUPFAM" id="SSF101238">
    <property type="entry name" value="XPC-binding domain"/>
    <property type="match status" value="1"/>
</dbReference>
<dbReference type="PROSITE" id="PS50030">
    <property type="entry name" value="UBA"/>
    <property type="match status" value="2"/>
</dbReference>
<dbReference type="PROSITE" id="PS50053">
    <property type="entry name" value="UBIQUITIN_2"/>
    <property type="match status" value="1"/>
</dbReference>
<proteinExistence type="evidence at protein level"/>
<accession>P54727</accession>
<accession>B3KWK8</accession>
<accession>G5E9P0</accession>
<accession>Q7Z5K8</accession>
<accession>Q8WUB0</accession>
<comment type="function">
    <text>Multiubiquitin chain receptor involved in modulation of proteasomal degradation. Binds to polyubiquitin chains. Proposed to be capable to bind simultaneously to the 26S proteasome and to polyubiquitinated substrates and to deliver ubiquitinated proteins to the proteasome. May play a role in endoplasmic reticulum-associated degradation (ERAD) of misfolded glycoproteins by association with PNGase and delivering deglycosylated proteins to the proteasome.</text>
</comment>
<comment type="function">
    <text>Involved in global genome nucleotide excision repair (GG-NER) by acting as component of the XPC complex. Cooperatively with CETN2 appears to stabilize XPC. May protect XPC from proteasomal degradation.</text>
</comment>
<comment type="function">
    <text>The XPC complex is proposed to represent the first factor bound at the sites of DNA damage and together with other core recognition factors, XPA, RPA and the TFIIH complex, is part of the pre-incision (or initial recognition) complex. The XPC complex recognizes a wide spectrum of damaged DNA characterized by distortions of the DNA helix such as single-stranded loops, mismatched bubbles or single-stranded overhangs. The orientation of XPC complex binding appears to be crucial for inducing a productive NER. XPC complex is proposed to recognize and to interact with unpaired bases on the undamaged DNA strand which is followed by recruitment of the TFIIH complex and subsequent scanning for lesions in the opposite strand in a 5'-to-3' direction by the NER machinery. Cyclobutane pyrimidine dimers (CPDs) which are formed upon UV-induced DNA damage esacpe detection by the XPC complex due to a low degree of structural perurbation. Instead they are detected by the UV-DDB complex which in turn recruits and cooperates with the XPC complex in the respective DNA repair. In vitro, the XPC:RAD23B dimer is sufficient to initiate NER; it preferentially binds to cisplatin and UV-damaged double-stranded DNA and also binds to a variety of chemically and structurally diverse DNA adducts. XPC:RAD23B contacts DNA both 5' and 3' of a cisplatin lesion with a preference for the 5' side. XPC:RAD23B induces a bend in DNA upon binding. XPC:RAD23B stimulates the activity of DNA glycosylases TDG and SMUG1.</text>
</comment>
<comment type="subunit">
    <text evidence="1 9">Component of the XPC complex composed of XPC, RAD23B and CETN2. Interacts with NGLY1 and PSMC1. Interacts with ATXN3 (PubMed:30455355). Interacts with PSMD4 and PSMC5. Interacts with AMFR. Interacts with VCP; the interaction is indirect and mediated by NGLY1 (By similarity).</text>
</comment>
<comment type="interaction">
    <interactant intactId="EBI-954531">
        <id>P54727</id>
    </interactant>
    <interactant intactId="EBI-954387">
        <id>Q16186</id>
        <label>ADRM1</label>
    </interactant>
    <organismsDiffer>false</organismsDiffer>
    <experiments>2</experiments>
</comment>
<comment type="interaction">
    <interactant intactId="EBI-954531">
        <id>P54727</id>
    </interactant>
    <interactant intactId="EBI-1183307">
        <id>P19447</id>
        <label>ERCC3</label>
    </interactant>
    <organismsDiffer>false</organismsDiffer>
    <experiments>2</experiments>
</comment>
<comment type="interaction">
    <interactant intactId="EBI-954531">
        <id>P54727</id>
    </interactant>
    <interactant intactId="EBI-473886">
        <id>O00291</id>
        <label>HIP1</label>
    </interactant>
    <organismsDiffer>false</organismsDiffer>
    <experiments>3</experiments>
</comment>
<comment type="interaction">
    <interactant intactId="EBI-954531">
        <id>P54727</id>
    </interactant>
    <interactant intactId="EBI-373524">
        <id>Q9UHC7</id>
        <label>MKRN1</label>
    </interactant>
    <organismsDiffer>false</organismsDiffer>
    <experiments>3</experiments>
</comment>
<comment type="interaction">
    <interactant intactId="EBI-954531">
        <id>P54727</id>
    </interactant>
    <interactant intactId="EBI-6165879">
        <id>Q96IV0</id>
        <label>NGLY1</label>
    </interactant>
    <organismsDiffer>false</organismsDiffer>
    <experiments>13</experiments>
</comment>
<comment type="interaction">
    <interactant intactId="EBI-954531">
        <id>P54727</id>
    </interactant>
    <interactant intactId="EBI-10171633">
        <id>Q96PV4</id>
        <label>PNMA5</label>
    </interactant>
    <organismsDiffer>false</organismsDiffer>
    <experiments>6</experiments>
</comment>
<comment type="interaction">
    <interactant intactId="EBI-954531">
        <id>P54727</id>
    </interactant>
    <interactant intactId="EBI-12029004">
        <id>P78424</id>
        <label>POU6F2</label>
    </interactant>
    <organismsDiffer>false</organismsDiffer>
    <experiments>3</experiments>
</comment>
<comment type="interaction">
    <interactant intactId="EBI-954531">
        <id>P54727</id>
    </interactant>
    <interactant intactId="EBI-359710">
        <id>P35998</id>
        <label>PSMC2</label>
    </interactant>
    <organismsDiffer>false</organismsDiffer>
    <experiments>2</experiments>
</comment>
<comment type="interaction">
    <interactant intactId="EBI-954531">
        <id>P54727</id>
    </interactant>
    <interactant intactId="EBI-359318">
        <id>P55036</id>
        <label>PSMD4</label>
    </interactant>
    <organismsDiffer>false</organismsDiffer>
    <experiments>11</experiments>
</comment>
<comment type="interaction">
    <interactant intactId="EBI-954531">
        <id>P54727</id>
    </interactant>
    <interactant intactId="EBI-1053259">
        <id>Q9UHX1</id>
        <label>PUF60</label>
    </interactant>
    <organismsDiffer>false</organismsDiffer>
    <experiments>3</experiments>
</comment>
<comment type="interaction">
    <interactant intactId="EBI-954531">
        <id>P54727</id>
    </interactant>
    <interactant intactId="EBI-11529177">
        <id>Q9UHX1-2</id>
        <label>PUF60</label>
    </interactant>
    <organismsDiffer>false</organismsDiffer>
    <experiments>3</experiments>
</comment>
<comment type="interaction">
    <interactant intactId="EBI-954531">
        <id>P54727</id>
    </interactant>
    <interactant intactId="EBI-3940171">
        <id>Q92681</id>
        <label>RSC1A1</label>
    </interactant>
    <organismsDiffer>false</organismsDiffer>
    <experiments>3</experiments>
</comment>
<comment type="interaction">
    <interactant intactId="EBI-954531">
        <id>P54727</id>
    </interactant>
    <interactant intactId="EBI-529518">
        <id>Q86VP1</id>
        <label>TAX1BP1</label>
    </interactant>
    <organismsDiffer>false</organismsDiffer>
    <experiments>3</experiments>
</comment>
<comment type="interaction">
    <interactant intactId="EBI-954531">
        <id>P54727</id>
    </interactant>
    <interactant intactId="EBI-717567">
        <id>Q8TBC4</id>
        <label>UBA3</label>
    </interactant>
    <organismsDiffer>false</organismsDiffer>
    <experiments>2</experiments>
</comment>
<comment type="interaction">
    <interactant intactId="EBI-954531">
        <id>P54727</id>
    </interactant>
    <interactant intactId="EBI-413034">
        <id>P0CG47</id>
        <label>UBB</label>
    </interactant>
    <organismsDiffer>false</organismsDiffer>
    <experiments>5</experiments>
</comment>
<comment type="interaction">
    <interactant intactId="EBI-954531">
        <id>P54727</id>
    </interactant>
    <interactant intactId="EBI-3390054">
        <id>P0CG48</id>
        <label>UBC</label>
    </interactant>
    <organismsDiffer>false</organismsDiffer>
    <experiments>5</experiments>
</comment>
<comment type="interaction">
    <interactant intactId="EBI-954531">
        <id>P54727</id>
    </interactant>
    <interactant intactId="EBI-947187">
        <id>Q9UHD9</id>
        <label>UBQLN2</label>
    </interactant>
    <organismsDiffer>false</organismsDiffer>
    <experiments>3</experiments>
</comment>
<comment type="interaction">
    <interactant intactId="EBI-954531">
        <id>P54727</id>
    </interactant>
    <interactant intactId="EBI-2513462">
        <id>Q9UHP3</id>
        <label>USP25</label>
    </interactant>
    <organismsDiffer>false</organismsDiffer>
    <experiments>6</experiments>
</comment>
<comment type="interaction">
    <interactant intactId="EBI-954531">
        <id>P54727</id>
    </interactant>
    <interactant intactId="EBI-741277">
        <id>P45974</id>
        <label>USP5</label>
    </interactant>
    <organismsDiffer>false</organismsDiffer>
    <experiments>2</experiments>
</comment>
<comment type="interaction">
    <interactant intactId="EBI-954531">
        <id>P54727</id>
    </interactant>
    <interactant intactId="EBI-353844">
        <id>P08670</id>
        <label>VIM</label>
    </interactant>
    <organismsDiffer>false</organismsDiffer>
    <experiments>2</experiments>
</comment>
<comment type="interaction">
    <interactant intactId="EBI-954531">
        <id>P54727</id>
    </interactant>
    <interactant intactId="EBI-372610">
        <id>Q01831</id>
        <label>XPC</label>
    </interactant>
    <organismsDiffer>false</organismsDiffer>
    <experiments>14</experiments>
</comment>
<comment type="interaction">
    <interactant intactId="EBI-954531">
        <id>P54727</id>
    </interactant>
    <interactant intactId="EBI-25475856">
        <id>P0DTC9</id>
        <label>N</label>
    </interactant>
    <organismsDiffer>true</organismsDiffer>
    <experiments>4</experiments>
</comment>
<comment type="interaction">
    <interactant intactId="EBI-954531">
        <id>P54727</id>
    </interactant>
    <interactant intactId="EBI-1208116">
        <id>P24610</id>
        <label>Pax3</label>
    </interactant>
    <organismsDiffer>true</organismsDiffer>
    <experiments>4</experiments>
</comment>
<comment type="subcellular location">
    <subcellularLocation>
        <location>Nucleus</location>
    </subcellularLocation>
    <subcellularLocation>
        <location>Cytoplasm</location>
    </subcellularLocation>
    <text>The intracellular distribution is cell cycle dependent. Localized to the nucleus and the cytoplasm during G1 phase. Nuclear levels decrease during S-phase; upon entering mitosis, relocalizes in the cytoplasm without association with chromatin.</text>
</comment>
<comment type="alternative products">
    <event type="alternative splicing"/>
    <isoform>
        <id>P54727-1</id>
        <name>1</name>
        <sequence type="displayed"/>
    </isoform>
    <isoform>
        <id>P54727-2</id>
        <name>2</name>
        <sequence type="described" ref="VSP_045606"/>
    </isoform>
</comment>
<comment type="domain">
    <text>The ubiquitin-like domain mediates interaction with ATXN3.</text>
</comment>
<comment type="miscellaneous">
    <molecule>Isoform 2</molecule>
    <text evidence="12">Highly expressed in the testis and in ejaculated spermatozoa.</text>
</comment>
<comment type="similarity">
    <text evidence="12">Belongs to the RAD23 family.</text>
</comment>
<organism>
    <name type="scientific">Homo sapiens</name>
    <name type="common">Human</name>
    <dbReference type="NCBI Taxonomy" id="9606"/>
    <lineage>
        <taxon>Eukaryota</taxon>
        <taxon>Metazoa</taxon>
        <taxon>Chordata</taxon>
        <taxon>Craniata</taxon>
        <taxon>Vertebrata</taxon>
        <taxon>Euteleostomi</taxon>
        <taxon>Mammalia</taxon>
        <taxon>Eutheria</taxon>
        <taxon>Euarchontoglires</taxon>
        <taxon>Primates</taxon>
        <taxon>Haplorrhini</taxon>
        <taxon>Catarrhini</taxon>
        <taxon>Hominidae</taxon>
        <taxon>Homo</taxon>
    </lineage>
</organism>
<name>RD23B_HUMAN</name>
<keyword id="KW-0002">3D-structure</keyword>
<keyword id="KW-0025">Alternative splicing</keyword>
<keyword id="KW-0963">Cytoplasm</keyword>
<keyword id="KW-0903">Direct protein sequencing</keyword>
<keyword id="KW-0227">DNA damage</keyword>
<keyword id="KW-0234">DNA repair</keyword>
<keyword id="KW-0539">Nucleus</keyword>
<keyword id="KW-0597">Phosphoprotein</keyword>
<keyword id="KW-0647">Proteasome</keyword>
<keyword id="KW-1267">Proteomics identification</keyword>
<keyword id="KW-1185">Reference proteome</keyword>
<keyword id="KW-0677">Repeat</keyword>
<keyword id="KW-0833">Ubl conjugation pathway</keyword>
<gene>
    <name type="primary">RAD23B</name>
</gene>
<feature type="chain" id="PRO_0000114906" description="UV excision repair protein RAD23 homolog B">
    <location>
        <begin position="1"/>
        <end position="409"/>
    </location>
</feature>
<feature type="domain" description="Ubiquitin-like" evidence="4">
    <location>
        <begin position="1"/>
        <end position="79"/>
    </location>
</feature>
<feature type="domain" description="UBA 1" evidence="3">
    <location>
        <begin position="188"/>
        <end position="228"/>
    </location>
</feature>
<feature type="domain" description="STI1">
    <location>
        <begin position="274"/>
        <end position="317"/>
    </location>
</feature>
<feature type="domain" description="UBA 2" evidence="3">
    <location>
        <begin position="364"/>
        <end position="404"/>
    </location>
</feature>
<feature type="region of interest" description="Disordered" evidence="5">
    <location>
        <begin position="80"/>
        <end position="175"/>
    </location>
</feature>
<feature type="region of interest" description="Disordered" evidence="5">
    <location>
        <begin position="236"/>
        <end position="276"/>
    </location>
</feature>
<feature type="compositionally biased region" description="Low complexity" evidence="5">
    <location>
        <begin position="81"/>
        <end position="143"/>
    </location>
</feature>
<feature type="compositionally biased region" description="Basic and acidic residues" evidence="5">
    <location>
        <begin position="144"/>
        <end position="153"/>
    </location>
</feature>
<feature type="compositionally biased region" description="Polar residues" evidence="5">
    <location>
        <begin position="160"/>
        <end position="175"/>
    </location>
</feature>
<feature type="compositionally biased region" description="Low complexity" evidence="5">
    <location>
        <begin position="252"/>
        <end position="271"/>
    </location>
</feature>
<feature type="modified residue" description="Phosphothreonine" evidence="13">
    <location>
        <position position="155"/>
    </location>
</feature>
<feature type="modified residue" description="Phosphoserine" evidence="14 15 16 17 18 19">
    <location>
        <position position="160"/>
    </location>
</feature>
<feature type="modified residue" description="Phosphothreonine" evidence="19">
    <location>
        <position position="164"/>
    </location>
</feature>
<feature type="modified residue" description="Phosphoserine" evidence="2">
    <location>
        <position position="174"/>
    </location>
</feature>
<feature type="modified residue" description="Phosphothreonine" evidence="2">
    <location>
        <position position="186"/>
    </location>
</feature>
<feature type="modified residue" description="Phosphoserine" evidence="2">
    <location>
        <position position="199"/>
    </location>
</feature>
<feature type="modified residue" description="Phosphotyrosine" evidence="2">
    <location>
        <position position="202"/>
    </location>
</feature>
<feature type="splice variant" id="VSP_045606" description="In isoform 2." evidence="11">
    <location>
        <begin position="1"/>
        <end position="72"/>
    </location>
</feature>
<feature type="sequence variant" id="VAR_014350" description="In dbSNP:rs1805329." evidence="6 7 10">
    <original>A</original>
    <variation>V</variation>
    <location>
        <position position="249"/>
    </location>
</feature>
<feature type="mutagenesis site" description="Impairs interaction with EEF1A1." evidence="8">
    <original>K</original>
    <variation>A</variation>
    <location>
        <position position="6"/>
    </location>
</feature>
<feature type="strand" evidence="20">
    <location>
        <begin position="1"/>
        <end position="7"/>
    </location>
</feature>
<feature type="strand" evidence="20">
    <location>
        <begin position="12"/>
        <end position="17"/>
    </location>
</feature>
<feature type="helix" evidence="20">
    <location>
        <begin position="23"/>
        <end position="34"/>
    </location>
</feature>
<feature type="turn" evidence="20">
    <location>
        <begin position="36"/>
        <end position="38"/>
    </location>
</feature>
<feature type="helix" evidence="20">
    <location>
        <begin position="41"/>
        <end position="43"/>
    </location>
</feature>
<feature type="strand" evidence="20">
    <location>
        <begin position="44"/>
        <end position="48"/>
    </location>
</feature>
<feature type="helix" evidence="20">
    <location>
        <begin position="59"/>
        <end position="62"/>
    </location>
</feature>
<feature type="strand" evidence="20">
    <location>
        <begin position="68"/>
        <end position="74"/>
    </location>
</feature>
<feature type="helix" evidence="21">
    <location>
        <begin position="277"/>
        <end position="279"/>
    </location>
</feature>
<feature type="turn" evidence="21">
    <location>
        <begin position="283"/>
        <end position="287"/>
    </location>
</feature>
<feature type="helix" evidence="21">
    <location>
        <begin position="288"/>
        <end position="292"/>
    </location>
</feature>
<feature type="helix" evidence="21">
    <location>
        <begin position="296"/>
        <end position="298"/>
    </location>
</feature>
<feature type="helix" evidence="21">
    <location>
        <begin position="299"/>
        <end position="307"/>
    </location>
</feature>
<feature type="helix" evidence="21">
    <location>
        <begin position="311"/>
        <end position="318"/>
    </location>
</feature>
<feature type="helix" evidence="21">
    <location>
        <begin position="321"/>
        <end position="329"/>
    </location>
</feature>
<feature type="helix" evidence="21">
    <location>
        <begin position="335"/>
        <end position="338"/>
    </location>
</feature>
<reference key="1">
    <citation type="journal article" date="1994" name="EMBO J.">
        <title>Purification and cloning of a nucleotide excision repair complex involving the Xeroderma pigmentosum group C protein and a human homologue of yeast RAD23.</title>
        <authorList>
            <person name="Masutani C."/>
            <person name="Sugasawa K."/>
            <person name="Yanagisawa J."/>
            <person name="Sonoyama T."/>
            <person name="Ui M."/>
            <person name="Enomoto T."/>
            <person name="Takio K."/>
            <person name="Tanaka K."/>
            <person name="van der Spek P.J."/>
            <person name="Bootsma D."/>
            <person name="Hoeijmakers J.H.J."/>
            <person name="Hanaoka F."/>
        </authorList>
    </citation>
    <scope>NUCLEOTIDE SEQUENCE [MRNA] (ISOFORM 1)</scope>
    <scope>PARTIAL PROTEIN SEQUENCE</scope>
</reference>
<reference key="2">
    <citation type="journal article" date="2004" name="J. Androl.">
        <title>Expression of a novel RAD23B mRNA splice variant in the human testis.</title>
        <authorList>
            <person name="Huang X."/>
            <person name="Wang H."/>
            <person name="Xu M."/>
            <person name="Lu L."/>
            <person name="Xu Z."/>
            <person name="Li J."/>
            <person name="Zhou Z."/>
            <person name="Sha J."/>
        </authorList>
    </citation>
    <scope>NUCLEOTIDE SEQUENCE [MRNA] (ISOFORM 2)</scope>
    <scope>VARIANT VAL-249</scope>
    <scope>ALTERNATIVE SPLICING</scope>
    <scope>TISSUE SPECIFICITY (ISOFORM 2)</scope>
    <source>
        <tissue>Testis</tissue>
    </source>
</reference>
<reference key="3">
    <citation type="submission" date="2002-10" db="EMBL/GenBank/DDBJ databases">
        <authorList>
            <consortium name="NIEHS SNPs program"/>
        </authorList>
    </citation>
    <scope>NUCLEOTIDE SEQUENCE [GENOMIC DNA]</scope>
    <scope>VARIANT VAL-249</scope>
</reference>
<reference key="4">
    <citation type="journal article" date="2004" name="Nat. Genet.">
        <title>Complete sequencing and characterization of 21,243 full-length human cDNAs.</title>
        <authorList>
            <person name="Ota T."/>
            <person name="Suzuki Y."/>
            <person name="Nishikawa T."/>
            <person name="Otsuki T."/>
            <person name="Sugiyama T."/>
            <person name="Irie R."/>
            <person name="Wakamatsu A."/>
            <person name="Hayashi K."/>
            <person name="Sato H."/>
            <person name="Nagai K."/>
            <person name="Kimura K."/>
            <person name="Makita H."/>
            <person name="Sekine M."/>
            <person name="Obayashi M."/>
            <person name="Nishi T."/>
            <person name="Shibahara T."/>
            <person name="Tanaka T."/>
            <person name="Ishii S."/>
            <person name="Yamamoto J."/>
            <person name="Saito K."/>
            <person name="Kawai Y."/>
            <person name="Isono Y."/>
            <person name="Nakamura Y."/>
            <person name="Nagahari K."/>
            <person name="Murakami K."/>
            <person name="Yasuda T."/>
            <person name="Iwayanagi T."/>
            <person name="Wagatsuma M."/>
            <person name="Shiratori A."/>
            <person name="Sudo H."/>
            <person name="Hosoiri T."/>
            <person name="Kaku Y."/>
            <person name="Kodaira H."/>
            <person name="Kondo H."/>
            <person name="Sugawara M."/>
            <person name="Takahashi M."/>
            <person name="Kanda K."/>
            <person name="Yokoi T."/>
            <person name="Furuya T."/>
            <person name="Kikkawa E."/>
            <person name="Omura Y."/>
            <person name="Abe K."/>
            <person name="Kamihara K."/>
            <person name="Katsuta N."/>
            <person name="Sato K."/>
            <person name="Tanikawa M."/>
            <person name="Yamazaki M."/>
            <person name="Ninomiya K."/>
            <person name="Ishibashi T."/>
            <person name="Yamashita H."/>
            <person name="Murakawa K."/>
            <person name="Fujimori K."/>
            <person name="Tanai H."/>
            <person name="Kimata M."/>
            <person name="Watanabe M."/>
            <person name="Hiraoka S."/>
            <person name="Chiba Y."/>
            <person name="Ishida S."/>
            <person name="Ono Y."/>
            <person name="Takiguchi S."/>
            <person name="Watanabe S."/>
            <person name="Yosida M."/>
            <person name="Hotuta T."/>
            <person name="Kusano J."/>
            <person name="Kanehori K."/>
            <person name="Takahashi-Fujii A."/>
            <person name="Hara H."/>
            <person name="Tanase T.-O."/>
            <person name="Nomura Y."/>
            <person name="Togiya S."/>
            <person name="Komai F."/>
            <person name="Hara R."/>
            <person name="Takeuchi K."/>
            <person name="Arita M."/>
            <person name="Imose N."/>
            <person name="Musashino K."/>
            <person name="Yuuki H."/>
            <person name="Oshima A."/>
            <person name="Sasaki N."/>
            <person name="Aotsuka S."/>
            <person name="Yoshikawa Y."/>
            <person name="Matsunawa H."/>
            <person name="Ichihara T."/>
            <person name="Shiohata N."/>
            <person name="Sano S."/>
            <person name="Moriya S."/>
            <person name="Momiyama H."/>
            <person name="Satoh N."/>
            <person name="Takami S."/>
            <person name="Terashima Y."/>
            <person name="Suzuki O."/>
            <person name="Nakagawa S."/>
            <person name="Senoh A."/>
            <person name="Mizoguchi H."/>
            <person name="Goto Y."/>
            <person name="Shimizu F."/>
            <person name="Wakebe H."/>
            <person name="Hishigaki H."/>
            <person name="Watanabe T."/>
            <person name="Sugiyama A."/>
            <person name="Takemoto M."/>
            <person name="Kawakami B."/>
            <person name="Yamazaki M."/>
            <person name="Watanabe K."/>
            <person name="Kumagai A."/>
            <person name="Itakura S."/>
            <person name="Fukuzumi Y."/>
            <person name="Fujimori Y."/>
            <person name="Komiyama M."/>
            <person name="Tashiro H."/>
            <person name="Tanigami A."/>
            <person name="Fujiwara T."/>
            <person name="Ono T."/>
            <person name="Yamada K."/>
            <person name="Fujii Y."/>
            <person name="Ozaki K."/>
            <person name="Hirao M."/>
            <person name="Ohmori Y."/>
            <person name="Kawabata A."/>
            <person name="Hikiji T."/>
            <person name="Kobatake N."/>
            <person name="Inagaki H."/>
            <person name="Ikema Y."/>
            <person name="Okamoto S."/>
            <person name="Okitani R."/>
            <person name="Kawakami T."/>
            <person name="Noguchi S."/>
            <person name="Itoh T."/>
            <person name="Shigeta K."/>
            <person name="Senba T."/>
            <person name="Matsumura K."/>
            <person name="Nakajima Y."/>
            <person name="Mizuno T."/>
            <person name="Morinaga M."/>
            <person name="Sasaki M."/>
            <person name="Togashi T."/>
            <person name="Oyama M."/>
            <person name="Hata H."/>
            <person name="Watanabe M."/>
            <person name="Komatsu T."/>
            <person name="Mizushima-Sugano J."/>
            <person name="Satoh T."/>
            <person name="Shirai Y."/>
            <person name="Takahashi Y."/>
            <person name="Nakagawa K."/>
            <person name="Okumura K."/>
            <person name="Nagase T."/>
            <person name="Nomura N."/>
            <person name="Kikuchi H."/>
            <person name="Masuho Y."/>
            <person name="Yamashita R."/>
            <person name="Nakai K."/>
            <person name="Yada T."/>
            <person name="Nakamura Y."/>
            <person name="Ohara O."/>
            <person name="Isogai T."/>
            <person name="Sugano S."/>
        </authorList>
    </citation>
    <scope>NUCLEOTIDE SEQUENCE [LARGE SCALE MRNA] (ISOFORM 1)</scope>
</reference>
<reference key="5">
    <citation type="journal article" date="2004" name="Nature">
        <title>DNA sequence and analysis of human chromosome 9.</title>
        <authorList>
            <person name="Humphray S.J."/>
            <person name="Oliver K."/>
            <person name="Hunt A.R."/>
            <person name="Plumb R.W."/>
            <person name="Loveland J.E."/>
            <person name="Howe K.L."/>
            <person name="Andrews T.D."/>
            <person name="Searle S."/>
            <person name="Hunt S.E."/>
            <person name="Scott C.E."/>
            <person name="Jones M.C."/>
            <person name="Ainscough R."/>
            <person name="Almeida J.P."/>
            <person name="Ambrose K.D."/>
            <person name="Ashwell R.I.S."/>
            <person name="Babbage A.K."/>
            <person name="Babbage S."/>
            <person name="Bagguley C.L."/>
            <person name="Bailey J."/>
            <person name="Banerjee R."/>
            <person name="Barker D.J."/>
            <person name="Barlow K.F."/>
            <person name="Bates K."/>
            <person name="Beasley H."/>
            <person name="Beasley O."/>
            <person name="Bird C.P."/>
            <person name="Bray-Allen S."/>
            <person name="Brown A.J."/>
            <person name="Brown J.Y."/>
            <person name="Burford D."/>
            <person name="Burrill W."/>
            <person name="Burton J."/>
            <person name="Carder C."/>
            <person name="Carter N.P."/>
            <person name="Chapman J.C."/>
            <person name="Chen Y."/>
            <person name="Clarke G."/>
            <person name="Clark S.Y."/>
            <person name="Clee C.M."/>
            <person name="Clegg S."/>
            <person name="Collier R.E."/>
            <person name="Corby N."/>
            <person name="Crosier M."/>
            <person name="Cummings A.T."/>
            <person name="Davies J."/>
            <person name="Dhami P."/>
            <person name="Dunn M."/>
            <person name="Dutta I."/>
            <person name="Dyer L.W."/>
            <person name="Earthrowl M.E."/>
            <person name="Faulkner L."/>
            <person name="Fleming C.J."/>
            <person name="Frankish A."/>
            <person name="Frankland J.A."/>
            <person name="French L."/>
            <person name="Fricker D.G."/>
            <person name="Garner P."/>
            <person name="Garnett J."/>
            <person name="Ghori J."/>
            <person name="Gilbert J.G.R."/>
            <person name="Glison C."/>
            <person name="Grafham D.V."/>
            <person name="Gribble S."/>
            <person name="Griffiths C."/>
            <person name="Griffiths-Jones S."/>
            <person name="Grocock R."/>
            <person name="Guy J."/>
            <person name="Hall R.E."/>
            <person name="Hammond S."/>
            <person name="Harley J.L."/>
            <person name="Harrison E.S.I."/>
            <person name="Hart E.A."/>
            <person name="Heath P.D."/>
            <person name="Henderson C.D."/>
            <person name="Hopkins B.L."/>
            <person name="Howard P.J."/>
            <person name="Howden P.J."/>
            <person name="Huckle E."/>
            <person name="Johnson C."/>
            <person name="Johnson D."/>
            <person name="Joy A.A."/>
            <person name="Kay M."/>
            <person name="Keenan S."/>
            <person name="Kershaw J.K."/>
            <person name="Kimberley A.M."/>
            <person name="King A."/>
            <person name="Knights A."/>
            <person name="Laird G.K."/>
            <person name="Langford C."/>
            <person name="Lawlor S."/>
            <person name="Leongamornlert D.A."/>
            <person name="Leversha M."/>
            <person name="Lloyd C."/>
            <person name="Lloyd D.M."/>
            <person name="Lovell J."/>
            <person name="Martin S."/>
            <person name="Mashreghi-Mohammadi M."/>
            <person name="Matthews L."/>
            <person name="McLaren S."/>
            <person name="McLay K.E."/>
            <person name="McMurray A."/>
            <person name="Milne S."/>
            <person name="Nickerson T."/>
            <person name="Nisbett J."/>
            <person name="Nordsiek G."/>
            <person name="Pearce A.V."/>
            <person name="Peck A.I."/>
            <person name="Porter K.M."/>
            <person name="Pandian R."/>
            <person name="Pelan S."/>
            <person name="Phillimore B."/>
            <person name="Povey S."/>
            <person name="Ramsey Y."/>
            <person name="Rand V."/>
            <person name="Scharfe M."/>
            <person name="Sehra H.K."/>
            <person name="Shownkeen R."/>
            <person name="Sims S.K."/>
            <person name="Skuce C.D."/>
            <person name="Smith M."/>
            <person name="Steward C.A."/>
            <person name="Swarbreck D."/>
            <person name="Sycamore N."/>
            <person name="Tester J."/>
            <person name="Thorpe A."/>
            <person name="Tracey A."/>
            <person name="Tromans A."/>
            <person name="Thomas D.W."/>
            <person name="Wall M."/>
            <person name="Wallis J.M."/>
            <person name="West A.P."/>
            <person name="Whitehead S.L."/>
            <person name="Willey D.L."/>
            <person name="Williams S.A."/>
            <person name="Wilming L."/>
            <person name="Wray P.W."/>
            <person name="Young L."/>
            <person name="Ashurst J.L."/>
            <person name="Coulson A."/>
            <person name="Blocker H."/>
            <person name="Durbin R.M."/>
            <person name="Sulston J.E."/>
            <person name="Hubbard T."/>
            <person name="Jackson M.J."/>
            <person name="Bentley D.R."/>
            <person name="Beck S."/>
            <person name="Rogers J."/>
            <person name="Dunham I."/>
        </authorList>
    </citation>
    <scope>NUCLEOTIDE SEQUENCE [LARGE SCALE GENOMIC DNA]</scope>
</reference>
<reference key="6">
    <citation type="submission" date="2005-07" db="EMBL/GenBank/DDBJ databases">
        <authorList>
            <person name="Mural R.J."/>
            <person name="Istrail S."/>
            <person name="Sutton G.G."/>
            <person name="Florea L."/>
            <person name="Halpern A.L."/>
            <person name="Mobarry C.M."/>
            <person name="Lippert R."/>
            <person name="Walenz B."/>
            <person name="Shatkay H."/>
            <person name="Dew I."/>
            <person name="Miller J.R."/>
            <person name="Flanigan M.J."/>
            <person name="Edwards N.J."/>
            <person name="Bolanos R."/>
            <person name="Fasulo D."/>
            <person name="Halldorsson B.V."/>
            <person name="Hannenhalli S."/>
            <person name="Turner R."/>
            <person name="Yooseph S."/>
            <person name="Lu F."/>
            <person name="Nusskern D.R."/>
            <person name="Shue B.C."/>
            <person name="Zheng X.H."/>
            <person name="Zhong F."/>
            <person name="Delcher A.L."/>
            <person name="Huson D.H."/>
            <person name="Kravitz S.A."/>
            <person name="Mouchard L."/>
            <person name="Reinert K."/>
            <person name="Remington K.A."/>
            <person name="Clark A.G."/>
            <person name="Waterman M.S."/>
            <person name="Eichler E.E."/>
            <person name="Adams M.D."/>
            <person name="Hunkapiller M.W."/>
            <person name="Myers E.W."/>
            <person name="Venter J.C."/>
        </authorList>
    </citation>
    <scope>NUCLEOTIDE SEQUENCE [LARGE SCALE GENOMIC DNA]</scope>
</reference>
<reference key="7">
    <citation type="journal article" date="2004" name="Genome Res.">
        <title>The status, quality, and expansion of the NIH full-length cDNA project: the Mammalian Gene Collection (MGC).</title>
        <authorList>
            <consortium name="The MGC Project Team"/>
        </authorList>
    </citation>
    <scope>NUCLEOTIDE SEQUENCE [LARGE SCALE MRNA] (ISOFORM 1)</scope>
    <scope>VARIANT VAL-249</scope>
    <source>
        <tissue>Uterus</tissue>
    </source>
</reference>
<reference key="8">
    <citation type="journal article" date="1997" name="Mol. Cell. Biol.">
        <title>Two human homologs of Rad23 are functionally interchangeable in complex formation and stimulation of XPC repair activity.</title>
        <authorList>
            <person name="Sugasawa K."/>
            <person name="Ng J.M."/>
            <person name="Masutani C."/>
            <person name="Maekawa T."/>
            <person name="Uchida A."/>
            <person name="van der Spek P.J."/>
            <person name="Eker A.P."/>
            <person name="Rademakers S."/>
            <person name="Visser C."/>
            <person name="Aboussekhra A."/>
            <person name="Wood R.D."/>
            <person name="Hanaoka F."/>
            <person name="Bootsma D."/>
            <person name="Hoeijmakers J.H."/>
        </authorList>
    </citation>
    <scope>FUNCTION</scope>
</reference>
<reference key="9">
    <citation type="journal article" date="1998" name="Mol. Cell">
        <title>Xeroderma pigmentosum group C protein complex is the initiator of global genome nucleotide excision repair.</title>
        <authorList>
            <person name="Sugasawa K."/>
            <person name="Ng J.M."/>
            <person name="Masutani C."/>
            <person name="Iwai S."/>
            <person name="van der Spek P.J."/>
            <person name="Eker A.P."/>
            <person name="Hanaoka F."/>
            <person name="Bootsma D."/>
            <person name="Hoeijmakers J.H."/>
        </authorList>
    </citation>
    <scope>FUNCTION OF THE XPC COMPLEX</scope>
</reference>
<reference key="10">
    <citation type="journal article" date="1999" name="J. Biol. Chem.">
        <title>Interaction of hHR23 with S5a. The ubiquitin-like domain of hHR23 mediates interaction with S5a subunit of 26 S proteasome.</title>
        <authorList>
            <person name="Hiyama H."/>
            <person name="Yokoi M."/>
            <person name="Masutani C."/>
            <person name="Sugasawa K."/>
            <person name="Maekawa T."/>
            <person name="Tanaka K."/>
            <person name="Hoeijmakers J.H."/>
            <person name="Hanaoka F."/>
        </authorList>
    </citation>
    <scope>INTERACTION WITH PSMD4 AND PSMC5</scope>
</reference>
<reference key="11">
    <citation type="journal article" date="2000" name="Hum. Mol. Genet.">
        <title>Ataxin-3, the MJD1 gene product, interacts with the two human homologs of yeast DNA repair protein RAD23, HHR23A and HHR23B.</title>
        <authorList>
            <person name="Wang G."/>
            <person name="Sawai N."/>
            <person name="Kotliarova S."/>
            <person name="Kanazawa I."/>
            <person name="Nukina N."/>
        </authorList>
    </citation>
    <scope>INTERACTION WITH ATXN3</scope>
</reference>
<reference key="12">
    <citation type="journal article" date="2000" name="J. Mol. Biol.">
        <title>Stable binding of human XPC complex to irradiated DNA confers strong discrimination for damaged sites.</title>
        <authorList>
            <person name="Batty D."/>
            <person name="Rapic'-Otrin V."/>
            <person name="Levine A.S."/>
            <person name="Wood R.D."/>
        </authorList>
    </citation>
    <scope>FUNCTION</scope>
    <scope>FUNCTION OF THE XPC COMPLEX</scope>
</reference>
<reference key="13">
    <citation type="journal article" date="2001" name="J. Biol. Chem.">
        <title>Centrosome protein centrin 2/caltractin 1 is part of the xeroderma pigmentosum group C complex that initiates global genome nucleotide excision repair.</title>
        <authorList>
            <person name="Araki M."/>
            <person name="Masutani C."/>
            <person name="Takemura M."/>
            <person name="Uchida A."/>
            <person name="Sugasawa K."/>
            <person name="Kondoh J."/>
            <person name="Ohkuma Y."/>
            <person name="Hanaoka F."/>
        </authorList>
    </citation>
    <scope>INTERACTION WITH CETN2</scope>
    <scope>SUBCELLULAR LOCATION</scope>
    <scope>CHARACTERIZATION OF THE XPC COMPLEX</scope>
</reference>
<reference key="14">
    <citation type="journal article" date="2002" name="DNA Repair">
        <title>A molecular mechanism for DNA damage recognition by the xeroderma pigmentosum group C protein complex.</title>
        <authorList>
            <person name="Sugasawa K."/>
            <person name="Shimizu Y."/>
            <person name="Iwai S."/>
            <person name="Hanaoka F."/>
        </authorList>
    </citation>
    <scope>FUNCTION OF THE XPC COMPLEX</scope>
</reference>
<reference key="15">
    <citation type="journal article" date="2002" name="DNA Repair">
        <title>The carboxy-terminal domain of the XPC protein plays a crucial role in nucleotide excision repair through interactions with transcription factor IIH.</title>
        <authorList>
            <person name="Uchida A."/>
            <person name="Sugasawa K."/>
            <person name="Masutani C."/>
            <person name="Dohmae N."/>
            <person name="Araki M."/>
            <person name="Yokoi M."/>
            <person name="Ohkuma Y."/>
            <person name="Hanaoka F."/>
        </authorList>
    </citation>
    <scope>INTERACTION WITH XPC</scope>
</reference>
<reference key="16">
    <citation type="journal article" date="2003" name="DNA Repair">
        <title>DNA bending by the human damage recognition complex XPC-HR23B.</title>
        <authorList>
            <person name="Janicijevic A."/>
            <person name="Sugasawa K."/>
            <person name="Shimizu Y."/>
            <person name="Hanaoka F."/>
            <person name="Wijgers N."/>
            <person name="Djurica M."/>
            <person name="Hoeijmakers J.H."/>
            <person name="Wyman C."/>
        </authorList>
    </citation>
    <scope>FUNCTION OF THE XPC COMPLEX</scope>
</reference>
<reference key="17">
    <citation type="journal article" date="2003" name="Genes Dev.">
        <title>A novel regulation mechanism of DNA repair by damage-induced and RAD23-dependent stabilization of xeroderma pigmentosum group C protein.</title>
        <authorList>
            <person name="Ng J.M."/>
            <person name="Vermeulen W."/>
            <person name="van der Horst G.T."/>
            <person name="Bergink S."/>
            <person name="Sugasawa K."/>
            <person name="Vrieling H."/>
            <person name="Hoeijmakers J.H."/>
        </authorList>
    </citation>
    <scope>FUNCTION</scope>
</reference>
<reference key="18">
    <citation type="journal article" date="2004" name="Proc. Natl. Acad. Sci. U.S.A.">
        <title>A complex between peptide:N-glycanase and two proteasome-linked proteins suggests a mechanism for the degradation of misfolded glycoproteins.</title>
        <authorList>
            <person name="Katiyar S."/>
            <person name="Li G."/>
            <person name="Lennarz W.J."/>
        </authorList>
    </citation>
    <scope>INTERACTION WITH NGLY1 AND PSMC1</scope>
</reference>
<reference key="19">
    <citation type="journal article" date="2005" name="Biochem. Biophys. Res. Commun.">
        <title>Studies on the intracellular localization of hHR23B.</title>
        <authorList>
            <person name="Katiyar S."/>
            <person name="Lennarz W.J."/>
        </authorList>
    </citation>
    <scope>SUBCELLULAR LOCATION</scope>
</reference>
<reference key="20">
    <citation type="journal article" date="2005" name="Mol. Cell. Biol.">
        <title>Centrin 2 stimulates nucleotide excision repair by interacting with xeroderma pigmentosum group C protein.</title>
        <authorList>
            <person name="Nishi R."/>
            <person name="Okuda Y."/>
            <person name="Watanabe E."/>
            <person name="Mori T."/>
            <person name="Iwai S."/>
            <person name="Masutani C."/>
            <person name="Sugasawa K."/>
            <person name="Hanaoka F."/>
        </authorList>
    </citation>
    <scope>INTERACTION WITH XPC</scope>
</reference>
<reference key="21">
    <citation type="journal article" date="2006" name="Cell">
        <title>Global, in vivo, and site-specific phosphorylation dynamics in signaling networks.</title>
        <authorList>
            <person name="Olsen J.V."/>
            <person name="Blagoev B."/>
            <person name="Gnad F."/>
            <person name="Macek B."/>
            <person name="Kumar C."/>
            <person name="Mortensen P."/>
            <person name="Mann M."/>
        </authorList>
    </citation>
    <scope>IDENTIFICATION BY MASS SPECTROMETRY [LARGE SCALE ANALYSIS]</scope>
    <source>
        <tissue>Cervix carcinoma</tissue>
    </source>
</reference>
<reference key="22">
    <citation type="journal article" date="2006" name="FEBS Lett.">
        <title>Evidence for distinct functions for human DNA repair factors hHR23A and hHR23B.</title>
        <authorList>
            <person name="Chen L."/>
            <person name="Madura K."/>
        </authorList>
    </citation>
    <scope>INTERACTION WITH EEF1A1</scope>
    <scope>MUTAGENESIS OF LYS-6</scope>
</reference>
<reference key="23">
    <citation type="journal article" date="2007" name="Biochemistry">
        <title>Mass spectrometric characterization of the affinity-purified human 26S proteasome complex.</title>
        <authorList>
            <person name="Wang X."/>
            <person name="Chen C.-F."/>
            <person name="Baker P.R."/>
            <person name="Chen P.-L."/>
            <person name="Kaiser P."/>
            <person name="Huang L."/>
        </authorList>
    </citation>
    <scope>PHOSPHORYLATION [LARGE SCALE ANALYSIS] AT THR-155</scope>
    <scope>IDENTIFICATION BY MASS SPECTROMETRY [LARGE SCALE ANALYSIS]</scope>
    <source>
        <tissue>Embryonic kidney</tissue>
    </source>
</reference>
<reference key="24">
    <citation type="journal article" date="2008" name="Mol. Cell">
        <title>Kinase-selective enrichment enables quantitative phosphoproteomics of the kinome across the cell cycle.</title>
        <authorList>
            <person name="Daub H."/>
            <person name="Olsen J.V."/>
            <person name="Bairlein M."/>
            <person name="Gnad F."/>
            <person name="Oppermann F.S."/>
            <person name="Korner R."/>
            <person name="Greff Z."/>
            <person name="Keri G."/>
            <person name="Stemmann O."/>
            <person name="Mann M."/>
        </authorList>
    </citation>
    <scope>IDENTIFICATION BY MASS SPECTROMETRY [LARGE SCALE ANALYSIS]</scope>
    <source>
        <tissue>Cervix carcinoma</tissue>
    </source>
</reference>
<reference key="25">
    <citation type="journal article" date="2008" name="Proc. Natl. Acad. Sci. U.S.A.">
        <title>A quantitative atlas of mitotic phosphorylation.</title>
        <authorList>
            <person name="Dephoure N."/>
            <person name="Zhou C."/>
            <person name="Villen J."/>
            <person name="Beausoleil S.A."/>
            <person name="Bakalarski C.E."/>
            <person name="Elledge S.J."/>
            <person name="Gygi S.P."/>
        </authorList>
    </citation>
    <scope>PHOSPHORYLATION [LARGE SCALE ANALYSIS] AT SER-160</scope>
    <scope>IDENTIFICATION BY MASS SPECTROMETRY [LARGE SCALE ANALYSIS]</scope>
    <source>
        <tissue>Cervix carcinoma</tissue>
    </source>
</reference>
<reference key="26">
    <citation type="journal article" date="2009" name="Anal. Chem.">
        <title>Lys-N and trypsin cover complementary parts of the phosphoproteome in a refined SCX-based approach.</title>
        <authorList>
            <person name="Gauci S."/>
            <person name="Helbig A.O."/>
            <person name="Slijper M."/>
            <person name="Krijgsveld J."/>
            <person name="Heck A.J."/>
            <person name="Mohammed S."/>
        </authorList>
    </citation>
    <scope>IDENTIFICATION BY MASS SPECTROMETRY [LARGE SCALE ANALYSIS]</scope>
</reference>
<reference key="27">
    <citation type="journal article" date="2009" name="Biochem. J.">
        <title>Variably modulated gating of the 26S proteasome by ATP and polyubiquitin.</title>
        <authorList>
            <person name="Li X."/>
            <person name="Demartino G.N."/>
        </authorList>
    </citation>
    <scope>FUNCTION IN PROTEASOMAL DEGRADATION</scope>
    <scope>POLYUBIQUITIN-BINDING</scope>
</reference>
<reference key="28">
    <citation type="journal article" date="2009" name="Mol. Cell">
        <title>Two-step recognition of DNA damage for mammalian nucleotide excision repair: Directional binding of the XPC complex and DNA strand scanning.</title>
        <authorList>
            <person name="Sugasawa K."/>
            <person name="Akagi J."/>
            <person name="Nishi R."/>
            <person name="Iwai S."/>
            <person name="Hanaoka F."/>
        </authorList>
    </citation>
    <scope>FUNCTION OF THE XPC COMPLEX</scope>
</reference>
<reference key="29">
    <citation type="journal article" date="2009" name="Sci. Signal.">
        <title>Quantitative phosphoproteomic analysis of T cell receptor signaling reveals system-wide modulation of protein-protein interactions.</title>
        <authorList>
            <person name="Mayya V."/>
            <person name="Lundgren D.H."/>
            <person name="Hwang S.-I."/>
            <person name="Rezaul K."/>
            <person name="Wu L."/>
            <person name="Eng J.K."/>
            <person name="Rodionov V."/>
            <person name="Han D.K."/>
        </authorList>
    </citation>
    <scope>PHOSPHORYLATION [LARGE SCALE ANALYSIS] AT SER-160</scope>
    <scope>IDENTIFICATION BY MASS SPECTROMETRY [LARGE SCALE ANALYSIS]</scope>
    <source>
        <tissue>Leukemic T-cell</tissue>
    </source>
</reference>
<reference key="30">
    <citation type="journal article" date="2010" name="Biochemistry">
        <title>Photo-cross-linking of XPC-Rad23B to cisplatin-damaged DNA reveals contacts with both strands of the DNA duplex and spans the DNA adduct.</title>
        <authorList>
            <person name="Neher T.M."/>
            <person name="Rechkunova N.I."/>
            <person name="Lavrik O.I."/>
            <person name="Turchi J.J."/>
        </authorList>
    </citation>
    <scope>FUNCTION OF THE XPC COMPLEX</scope>
</reference>
<reference key="31">
    <citation type="journal article" date="2010" name="J. Nucleic Acids">
        <title>Stimulation of DNA glycosylase activities by XPC Protein Complex: Roles of protein-protein interactions.</title>
        <authorList>
            <person name="Shimizu Y."/>
            <person name="Uchimura Y."/>
            <person name="Dohmae N."/>
            <person name="Saitoh H."/>
            <person name="Hanaoka F."/>
            <person name="Sugasawa K."/>
        </authorList>
    </citation>
    <scope>FUNCTION OF THE XPC COMPLEX</scope>
</reference>
<reference key="32">
    <citation type="journal article" date="2010" name="Sci. Signal.">
        <title>Quantitative phosphoproteomics reveals widespread full phosphorylation site occupancy during mitosis.</title>
        <authorList>
            <person name="Olsen J.V."/>
            <person name="Vermeulen M."/>
            <person name="Santamaria A."/>
            <person name="Kumar C."/>
            <person name="Miller M.L."/>
            <person name="Jensen L.J."/>
            <person name="Gnad F."/>
            <person name="Cox J."/>
            <person name="Jensen T.S."/>
            <person name="Nigg E.A."/>
            <person name="Brunak S."/>
            <person name="Mann M."/>
        </authorList>
    </citation>
    <scope>PHOSPHORYLATION [LARGE SCALE ANALYSIS] AT SER-160</scope>
    <scope>IDENTIFICATION BY MASS SPECTROMETRY [LARGE SCALE ANALYSIS]</scope>
    <source>
        <tissue>Cervix carcinoma</tissue>
    </source>
</reference>
<reference key="33">
    <citation type="journal article" date="2011" name="BMC Syst. Biol.">
        <title>Initial characterization of the human central proteome.</title>
        <authorList>
            <person name="Burkard T.R."/>
            <person name="Planyavsky M."/>
            <person name="Kaupe I."/>
            <person name="Breitwieser F.P."/>
            <person name="Buerckstuemmer T."/>
            <person name="Bennett K.L."/>
            <person name="Superti-Furga G."/>
            <person name="Colinge J."/>
        </authorList>
    </citation>
    <scope>IDENTIFICATION BY MASS SPECTROMETRY [LARGE SCALE ANALYSIS]</scope>
</reference>
<reference key="34">
    <citation type="journal article" date="2011" name="Sci. Signal.">
        <title>System-wide temporal characterization of the proteome and phosphoproteome of human embryonic stem cell differentiation.</title>
        <authorList>
            <person name="Rigbolt K.T."/>
            <person name="Prokhorova T.A."/>
            <person name="Akimov V."/>
            <person name="Henningsen J."/>
            <person name="Johansen P.T."/>
            <person name="Kratchmarova I."/>
            <person name="Kassem M."/>
            <person name="Mann M."/>
            <person name="Olsen J.V."/>
            <person name="Blagoev B."/>
        </authorList>
    </citation>
    <scope>PHOSPHORYLATION [LARGE SCALE ANALYSIS] AT SER-160</scope>
    <scope>IDENTIFICATION BY MASS SPECTROMETRY [LARGE SCALE ANALYSIS]</scope>
</reference>
<reference key="35">
    <citation type="journal article" date="2013" name="J. Proteome Res.">
        <title>Toward a comprehensive characterization of a human cancer cell phosphoproteome.</title>
        <authorList>
            <person name="Zhou H."/>
            <person name="Di Palma S."/>
            <person name="Preisinger C."/>
            <person name="Peng M."/>
            <person name="Polat A.N."/>
            <person name="Heck A.J."/>
            <person name="Mohammed S."/>
        </authorList>
    </citation>
    <scope>PHOSPHORYLATION [LARGE SCALE ANALYSIS] AT SER-160</scope>
    <scope>IDENTIFICATION BY MASS SPECTROMETRY [LARGE SCALE ANALYSIS]</scope>
    <source>
        <tissue>Cervix carcinoma</tissue>
        <tissue>Erythroleukemia</tissue>
    </source>
</reference>
<reference key="36">
    <citation type="journal article" date="2014" name="J. Proteomics">
        <title>An enzyme assisted RP-RPLC approach for in-depth analysis of human liver phosphoproteome.</title>
        <authorList>
            <person name="Bian Y."/>
            <person name="Song C."/>
            <person name="Cheng K."/>
            <person name="Dong M."/>
            <person name="Wang F."/>
            <person name="Huang J."/>
            <person name="Sun D."/>
            <person name="Wang L."/>
            <person name="Ye M."/>
            <person name="Zou H."/>
        </authorList>
    </citation>
    <scope>PHOSPHORYLATION [LARGE SCALE ANALYSIS] AT SER-160 AND THR-164</scope>
    <scope>IDENTIFICATION BY MASS SPECTROMETRY [LARGE SCALE ANALYSIS]</scope>
    <source>
        <tissue>Liver</tissue>
    </source>
</reference>
<reference key="37">
    <citation type="journal article" date="2019" name="J. Biol. Chem.">
        <title>Physiological and pathophysiological characteristics of ataxin-3 isoforms.</title>
        <authorList>
            <person name="Weishaeupl D."/>
            <person name="Schneider J."/>
            <person name="Peixoto Pinheiro B."/>
            <person name="Ruess C."/>
            <person name="Dold S.M."/>
            <person name="von Zweydorf F."/>
            <person name="Gloeckner C.J."/>
            <person name="Schmidt J."/>
            <person name="Riess O."/>
            <person name="Schmidt T."/>
        </authorList>
    </citation>
    <scope>INTERACTION WITH ATXN3</scope>
</reference>
<reference key="38">
    <citation type="journal article" date="2003" name="J. Biol. Chem.">
        <title>Binding surface mapping of intra- and interdomain interactions among hHR23B, ubiquitin, and polyubiquitin binding site 2 of S5a.</title>
        <authorList>
            <person name="Ryu K.-S."/>
            <person name="Lee K.-J."/>
            <person name="Bae S.-H."/>
            <person name="Kim B.-K."/>
            <person name="Kim K.-A."/>
            <person name="Choi B.-S."/>
        </authorList>
    </citation>
    <scope>STRUCTURE BY NMR OF 1-82</scope>
</reference>
<reference key="39">
    <citation type="journal article" date="2004" name="J. Biol. Chem.">
        <title>Structure of the ubiquitin-interacting motif of S5a bound to the ubiquitin-like domain of HR23B.</title>
        <authorList>
            <person name="Fujiwara K."/>
            <person name="Tenno T."/>
            <person name="Sugasawa K."/>
            <person name="Jee J.-G."/>
            <person name="Ohki I."/>
            <person name="Kojima C."/>
            <person name="Tochio H."/>
            <person name="Hiroaki H."/>
            <person name="Hanaoka F."/>
            <person name="Shirakawa M."/>
        </authorList>
    </citation>
    <scope>STRUCTURE BY NMR OF 1-87 IN COMPLEX WITH PSMD4</scope>
</reference>
<reference key="40">
    <citation type="journal article" date="2005" name="FEBS J.">
        <title>Solution structure and backbone dynamics of the XPC-binding domain of the human DNA repair protein hHR23B.</title>
        <authorList>
            <person name="Kim B."/>
            <person name="Ryu K.-S."/>
            <person name="Kim H.-J."/>
            <person name="Cho S.-J."/>
            <person name="Choi B.-S."/>
        </authorList>
    </citation>
    <scope>STRUCTURE BY NMR OF 275-342</scope>
    <scope>FUNCTION</scope>
</reference>
<protein>
    <recommendedName>
        <fullName>UV excision repair protein RAD23 homolog B</fullName>
        <shortName>HR23B</shortName>
        <shortName>hHR23B</shortName>
    </recommendedName>
    <alternativeName>
        <fullName>XP-C repair-complementing complex 58 kDa protein</fullName>
        <shortName>p58</shortName>
    </alternativeName>
</protein>
<sequence>MQVTLKTLQQQTFKIDIDPEETVKALKEKIESEKGKDAFPVAGQKLIYAGKILNDDTALKEYKIDEKNFVVVMVTKPKAVSTPAPATTQQSAPASTTAVTSSTTTTVAQAPTPVPALAPTSTPASITPASATASSEPAPASAAKQEKPAEKPAETPVATSPTATDSTSGDSSRSNLFEDATSALVTGQSYENMVTEIMSMGYEREQVIAALRASFNNPDRAVEYLLMGIPGDRESQAVVDPPQAASTGAPQSSAVAAAAATTTATTTTTSSGGHPLEFLRNQPQFQQMRQIIQQNPSLLPALLQQIGRENPQLLQQISQHQEHFIQMLNEPVQEAGGQGGGGGGGSGGIAEAGSGHMNYIQVTPQEKEAIERLKALGFPEGLVIQAYFACEKNENLAANFLLQQNFDED</sequence>
<evidence type="ECO:0000250" key="1"/>
<evidence type="ECO:0000250" key="2">
    <source>
        <dbReference type="UniProtKB" id="Q4KMA2"/>
    </source>
</evidence>
<evidence type="ECO:0000255" key="3">
    <source>
        <dbReference type="PROSITE-ProRule" id="PRU00212"/>
    </source>
</evidence>
<evidence type="ECO:0000255" key="4">
    <source>
        <dbReference type="PROSITE-ProRule" id="PRU00214"/>
    </source>
</evidence>
<evidence type="ECO:0000256" key="5">
    <source>
        <dbReference type="SAM" id="MobiDB-lite"/>
    </source>
</evidence>
<evidence type="ECO:0000269" key="6">
    <source>
    </source>
</evidence>
<evidence type="ECO:0000269" key="7">
    <source>
    </source>
</evidence>
<evidence type="ECO:0000269" key="8">
    <source>
    </source>
</evidence>
<evidence type="ECO:0000269" key="9">
    <source>
    </source>
</evidence>
<evidence type="ECO:0000269" key="10">
    <source ref="3"/>
</evidence>
<evidence type="ECO:0000303" key="11">
    <source>
    </source>
</evidence>
<evidence type="ECO:0000305" key="12"/>
<evidence type="ECO:0007744" key="13">
    <source>
    </source>
</evidence>
<evidence type="ECO:0007744" key="14">
    <source>
    </source>
</evidence>
<evidence type="ECO:0007744" key="15">
    <source>
    </source>
</evidence>
<evidence type="ECO:0007744" key="16">
    <source>
    </source>
</evidence>
<evidence type="ECO:0007744" key="17">
    <source>
    </source>
</evidence>
<evidence type="ECO:0007744" key="18">
    <source>
    </source>
</evidence>
<evidence type="ECO:0007744" key="19">
    <source>
    </source>
</evidence>
<evidence type="ECO:0007829" key="20">
    <source>
        <dbReference type="PDB" id="1P1A"/>
    </source>
</evidence>
<evidence type="ECO:0007829" key="21">
    <source>
        <dbReference type="PDB" id="1PVE"/>
    </source>
</evidence>